<protein>
    <recommendedName>
        <fullName>Fiber protein 1</fullName>
    </recommendedName>
</protein>
<sequence length="562" mass="60601">MKRARLEDDFNPVYPYEHYNPLDIPFITPPFASSNGLQEKPPGVLSLKYTDPLTTKNGALTLKLGTGLNIDENGDLSSDASVEVSAPITKTNKIVGLNYTKPLALRSNALTLSYNAPLNVVNNNLALNISQPVTVNANNELSLLIDAPLNADTGTLRLQSAAPLGLVDKTLKVLFSSPLYLDNNFLTLAIERPLALSSSRAVTLKYSPPLKIENENLTLSTGGPFTVSGGNLNLTTSAPLSVQNNSLSLVITSPLKVINSMLAVGVNPPFTITDSGLAMDLGDGLALGGSKLIINLGPGLQMSNGAITLALDAALPLQYRDNQLQLRIGSTSGLIMSGVTQTLNVNANTGKGLAVENNSLVVKLGNGLRFDSWGSITVSPTTTTPTTLWTTADPSPNATFYESLDAKVWLVLVKCNGMVNGTISIKAQKGILLRPTASFISFVMYFYSDGTWRKNYPVFDNEGILANSATWGYRQGQSANTNVSNAVEFMPSSKRYPNQKGSEVQNMALTYTFLQGDPNMAISFQSIYNHALEGYSLKFTWRVRNNERFDIPCCSFSYVTEQ</sequence>
<accession>P14267</accession>
<organismHost>
    <name type="scientific">Homo sapiens</name>
    <name type="common">Human</name>
    <dbReference type="NCBI Taxonomy" id="9606"/>
</organismHost>
<feature type="chain" id="PRO_0000221801" description="Fiber protein 1">
    <location>
        <begin position="1"/>
        <end position="562"/>
    </location>
</feature>
<name>SPIK1_ADE41</name>
<reference key="1">
    <citation type="journal article" date="1989" name="Nucleic Acids Res.">
        <title>Sequence of human enteric adenovirus type 41 Tak fiber protein gene.</title>
        <authorList>
            <person name="Pieniazek N.J."/>
            <person name="Slemenda S.B."/>
            <person name="Pieniazek D."/>
            <person name="Velarde J. Jr."/>
            <person name="Luftig R.B."/>
        </authorList>
    </citation>
    <scope>NUCLEOTIDE SEQUENCE [GENOMIC DNA]</scope>
    <source>
        <strain>Tak</strain>
    </source>
</reference>
<reference key="2">
    <citation type="journal article" date="1990" name="Virology">
        <title>Fiber sequence heterogeneity in subgroup F adenoviruses.</title>
        <authorList>
            <person name="Kidd A.H."/>
            <person name="Erasmus M.J."/>
            <person name="Tiemessen C.T."/>
        </authorList>
    </citation>
    <scope>NUCLEOTIDE SEQUENCE [GENOMIC DNA]</scope>
    <source>
        <strain>FB585</strain>
    </source>
</reference>
<reference key="3">
    <citation type="journal article" date="1990" name="Nucleic Acids Res.">
        <title>Human enteric adenovirus type 41 (Tak) contains a second fiber protein gene.</title>
        <authorList>
            <person name="Pieniazek N.J."/>
            <person name="Slemenda S.B."/>
            <person name="Pieniazek D."/>
            <person name="Velarde J. Jr."/>
            <person name="Luftig R.B."/>
        </authorList>
    </citation>
    <scope>NUCLEOTIDE SEQUENCE [GENOMIC DNA] OF 1-14</scope>
    <source>
        <strain>Tak</strain>
    </source>
</reference>
<reference key="4">
    <citation type="journal article" date="2005" name="J. Virol.">
        <title>Adenovirus receptors.</title>
        <authorList>
            <person name="Zhang Y."/>
            <person name="Bergelson J.M."/>
        </authorList>
    </citation>
    <scope>REVIEW</scope>
</reference>
<organism>
    <name type="scientific">Human adenovirus F serotype 41</name>
    <name type="common">HAdV-41</name>
    <name type="synonym">Human adenovirus 41</name>
    <dbReference type="NCBI Taxonomy" id="10524"/>
    <lineage>
        <taxon>Viruses</taxon>
        <taxon>Varidnaviria</taxon>
        <taxon>Bamfordvirae</taxon>
        <taxon>Preplasmiviricota</taxon>
        <taxon>Tectiliviricetes</taxon>
        <taxon>Rowavirales</taxon>
        <taxon>Adenoviridae</taxon>
        <taxon>Mastadenovirus</taxon>
        <taxon>Human mastadenovirus F</taxon>
    </lineage>
</organism>
<dbReference type="EMBL" id="X16583">
    <property type="protein sequence ID" value="CAA34600.1"/>
    <property type="molecule type" value="Genomic_DNA"/>
</dbReference>
<dbReference type="EMBL" id="M60327">
    <property type="protein sequence ID" value="AAA42506.1"/>
    <property type="molecule type" value="Genomic_DNA"/>
</dbReference>
<dbReference type="EMBL" id="X17016">
    <property type="protein sequence ID" value="CAA34883.1"/>
    <property type="molecule type" value="Genomic_DNA"/>
</dbReference>
<dbReference type="PIR" id="A34145">
    <property type="entry name" value="ERADN2"/>
</dbReference>
<dbReference type="SMR" id="P14267"/>
<dbReference type="GO" id="GO:0042025">
    <property type="term" value="C:host cell nucleus"/>
    <property type="evidence" value="ECO:0007669"/>
    <property type="project" value="UniProtKB-SubCell"/>
</dbReference>
<dbReference type="GO" id="GO:0019028">
    <property type="term" value="C:viral capsid"/>
    <property type="evidence" value="ECO:0007669"/>
    <property type="project" value="UniProtKB-KW"/>
</dbReference>
<dbReference type="GO" id="GO:0098671">
    <property type="term" value="P:adhesion receptor-mediated virion attachment to host cell"/>
    <property type="evidence" value="ECO:0007669"/>
    <property type="project" value="UniProtKB-KW"/>
</dbReference>
<dbReference type="GO" id="GO:0007155">
    <property type="term" value="P:cell adhesion"/>
    <property type="evidence" value="ECO:0007669"/>
    <property type="project" value="InterPro"/>
</dbReference>
<dbReference type="GO" id="GO:0046718">
    <property type="term" value="P:symbiont entry into host cell"/>
    <property type="evidence" value="ECO:0007669"/>
    <property type="project" value="UniProtKB-KW"/>
</dbReference>
<dbReference type="Gene3D" id="6.20.10.20">
    <property type="match status" value="2"/>
</dbReference>
<dbReference type="Gene3D" id="2.60.90.10">
    <property type="entry name" value="Adenovirus pIV-related, attachment domain"/>
    <property type="match status" value="1"/>
</dbReference>
<dbReference type="Gene3D" id="2.10.25.20">
    <property type="entry name" value="reovirus attachment protein sigma1, domain 1"/>
    <property type="match status" value="2"/>
</dbReference>
<dbReference type="InterPro" id="IPR000931">
    <property type="entry name" value="Adeno_fibre"/>
</dbReference>
<dbReference type="InterPro" id="IPR000978">
    <property type="entry name" value="Adeno_fibre_knob"/>
</dbReference>
<dbReference type="InterPro" id="IPR000939">
    <property type="entry name" value="Adenobir_fibre_prot_rpt/shaft"/>
</dbReference>
<dbReference type="InterPro" id="IPR008982">
    <property type="entry name" value="Adenovirus_pIV-like_att"/>
</dbReference>
<dbReference type="InterPro" id="IPR009013">
    <property type="entry name" value="Attachment_protein_shaft_sf"/>
</dbReference>
<dbReference type="Pfam" id="PF00541">
    <property type="entry name" value="Adeno_knob"/>
    <property type="match status" value="1"/>
</dbReference>
<dbReference type="Pfam" id="PF00608">
    <property type="entry name" value="Adeno_shaft"/>
    <property type="match status" value="7"/>
</dbReference>
<dbReference type="PRINTS" id="PR00307">
    <property type="entry name" value="ADENOVSFIBRE"/>
</dbReference>
<dbReference type="SUPFAM" id="SSF51225">
    <property type="entry name" value="Fibre shaft of virus attachment proteins"/>
    <property type="match status" value="4"/>
</dbReference>
<dbReference type="SUPFAM" id="SSF49835">
    <property type="entry name" value="Virus attachment protein globular domain"/>
    <property type="match status" value="1"/>
</dbReference>
<comment type="function">
    <text evidence="1">Forms spikes that protrude from each vertex of the icosahedral capsid. Interacts with host receptor CXCAR to provide virion initial attachment to target cell. Fiber proteins are shed during virus entry, when virus is still at the cell surface (By similarity).</text>
</comment>
<comment type="subunit">
    <text evidence="1">Homotrimer. Interacts with host receptor CXCAR. Interacts (via N-terminal tail region) with pentons (By similarity).</text>
</comment>
<comment type="subcellular location">
    <subcellularLocation>
        <location evidence="1">Virion</location>
    </subcellularLocation>
    <subcellularLocation>
        <location evidence="1">Host nucleus</location>
    </subcellularLocation>
    <text evidence="1">Anchored to the pentons, protrudes from the virion surface.</text>
</comment>
<comment type="induction">
    <text>Expressed in the late phase of the viral replicative cycle.</text>
</comment>
<comment type="domain">
    <text evidence="1">The tail region anchors the fiber to penton base capsomers, whereas the shaft, built from several repeated motifs, allows the knob to protrude from the virion.</text>
</comment>
<comment type="miscellaneous">
    <text evidence="1">All late proteins expressed from the major late promoter are produced by alternative splicing and alternative polyadenylation of the same gene giving rise to non-overlapping ORFs. A leader sequence is present in the N-terminus of all these mRNAs and is recognized by the viral shutoff protein to provide expression although conventional translation via ribosome scanning from the cap has been shut off in the host cell (By similarity).</text>
</comment>
<comment type="similarity">
    <text evidence="2">Belongs to the adenoviridae fiber family.</text>
</comment>
<keyword id="KW-0167">Capsid protein</keyword>
<keyword id="KW-1048">Host nucleus</keyword>
<keyword id="KW-0945">Host-virus interaction</keyword>
<keyword id="KW-0426">Late protein</keyword>
<keyword id="KW-1233">Viral attachment to host adhesion receptor</keyword>
<keyword id="KW-1161">Viral attachment to host cell</keyword>
<keyword id="KW-0946">Virion</keyword>
<keyword id="KW-1160">Virus entry into host cell</keyword>
<proteinExistence type="evidence at transcript level"/>
<evidence type="ECO:0000250" key="1"/>
<evidence type="ECO:0000305" key="2"/>